<comment type="function">
    <text evidence="1">Catalyzes the reversible reaction in which hydroxymethyl group from 5,10-methylenetetrahydrofolate is transferred onto alpha-ketoisovalerate to form ketopantoate.</text>
</comment>
<comment type="catalytic activity">
    <reaction evidence="1">
        <text>3-methyl-2-oxobutanoate + (6R)-5,10-methylene-5,6,7,8-tetrahydrofolate + H2O = 2-dehydropantoate + (6S)-5,6,7,8-tetrahydrofolate</text>
        <dbReference type="Rhea" id="RHEA:11824"/>
        <dbReference type="ChEBI" id="CHEBI:11561"/>
        <dbReference type="ChEBI" id="CHEBI:11851"/>
        <dbReference type="ChEBI" id="CHEBI:15377"/>
        <dbReference type="ChEBI" id="CHEBI:15636"/>
        <dbReference type="ChEBI" id="CHEBI:57453"/>
        <dbReference type="EC" id="2.1.2.11"/>
    </reaction>
</comment>
<comment type="cofactor">
    <cofactor evidence="1">
        <name>Mg(2+)</name>
        <dbReference type="ChEBI" id="CHEBI:18420"/>
    </cofactor>
    <text evidence="1">Binds 1 Mg(2+) ion per subunit.</text>
</comment>
<comment type="pathway">
    <text evidence="1">Cofactor biosynthesis; (R)-pantothenate biosynthesis; (R)-pantoate from 3-methyl-2-oxobutanoate: step 1/2.</text>
</comment>
<comment type="subunit">
    <text evidence="1">Homodecamer; pentamer of dimers.</text>
</comment>
<comment type="subcellular location">
    <subcellularLocation>
        <location evidence="1">Cytoplasm</location>
    </subcellularLocation>
</comment>
<comment type="similarity">
    <text evidence="1">Belongs to the PanB family.</text>
</comment>
<proteinExistence type="inferred from homology"/>
<sequence>MISLSDLRKFKAEGRKFSCLTCYDASMAKAMELAEIDTILIGDSLGMAIQGRDSTLPVTVEDMAYHTAAVRRGNQHALIMTDLPFMSYATLNDALQNAKTVMQAGAQMIKIEGGAWLSETVQVLTRNGVPVCVHLGLTPQSVHVFGGYKLQARTREAADQLIADCTAVVEAGAAVLLLECVPAQLGQEIAELFPNTPVIGIGAGNATDGQVLVVQDMLGLTFGRVARFVRNFMKEQSGETAILDAFKAFHAAVQDQSFPAKEHTFQVEL</sequence>
<evidence type="ECO:0000255" key="1">
    <source>
        <dbReference type="HAMAP-Rule" id="MF_00156"/>
    </source>
</evidence>
<gene>
    <name evidence="1" type="primary">panB</name>
    <name type="ordered locus">ABAYE3175</name>
</gene>
<protein>
    <recommendedName>
        <fullName evidence="1">3-methyl-2-oxobutanoate hydroxymethyltransferase</fullName>
        <ecNumber evidence="1">2.1.2.11</ecNumber>
    </recommendedName>
    <alternativeName>
        <fullName evidence="1">Ketopantoate hydroxymethyltransferase</fullName>
        <shortName evidence="1">KPHMT</shortName>
    </alternativeName>
</protein>
<organism>
    <name type="scientific">Acinetobacter baumannii (strain AYE)</name>
    <dbReference type="NCBI Taxonomy" id="509173"/>
    <lineage>
        <taxon>Bacteria</taxon>
        <taxon>Pseudomonadati</taxon>
        <taxon>Pseudomonadota</taxon>
        <taxon>Gammaproteobacteria</taxon>
        <taxon>Moraxellales</taxon>
        <taxon>Moraxellaceae</taxon>
        <taxon>Acinetobacter</taxon>
        <taxon>Acinetobacter calcoaceticus/baumannii complex</taxon>
    </lineage>
</organism>
<accession>B0V5M5</accession>
<dbReference type="EC" id="2.1.2.11" evidence="1"/>
<dbReference type="EMBL" id="CU459141">
    <property type="protein sequence ID" value="CAM87984.1"/>
    <property type="molecule type" value="Genomic_DNA"/>
</dbReference>
<dbReference type="RefSeq" id="WP_000624763.1">
    <property type="nucleotide sequence ID" value="NZ_JBDGFB010000020.1"/>
</dbReference>
<dbReference type="SMR" id="B0V5M5"/>
<dbReference type="EnsemblBacteria" id="CAM87984">
    <property type="protein sequence ID" value="CAM87984"/>
    <property type="gene ID" value="ABAYE3175"/>
</dbReference>
<dbReference type="GeneID" id="92892564"/>
<dbReference type="KEGG" id="aby:ABAYE3175"/>
<dbReference type="HOGENOM" id="CLU_036645_1_0_6"/>
<dbReference type="UniPathway" id="UPA00028">
    <property type="reaction ID" value="UER00003"/>
</dbReference>
<dbReference type="GO" id="GO:0005737">
    <property type="term" value="C:cytoplasm"/>
    <property type="evidence" value="ECO:0007669"/>
    <property type="project" value="UniProtKB-SubCell"/>
</dbReference>
<dbReference type="GO" id="GO:0003864">
    <property type="term" value="F:3-methyl-2-oxobutanoate hydroxymethyltransferase activity"/>
    <property type="evidence" value="ECO:0007669"/>
    <property type="project" value="UniProtKB-UniRule"/>
</dbReference>
<dbReference type="GO" id="GO:0000287">
    <property type="term" value="F:magnesium ion binding"/>
    <property type="evidence" value="ECO:0007669"/>
    <property type="project" value="TreeGrafter"/>
</dbReference>
<dbReference type="GO" id="GO:0015940">
    <property type="term" value="P:pantothenate biosynthetic process"/>
    <property type="evidence" value="ECO:0007669"/>
    <property type="project" value="UniProtKB-UniRule"/>
</dbReference>
<dbReference type="CDD" id="cd06557">
    <property type="entry name" value="KPHMT-like"/>
    <property type="match status" value="1"/>
</dbReference>
<dbReference type="FunFam" id="3.20.20.60:FF:000003">
    <property type="entry name" value="3-methyl-2-oxobutanoate hydroxymethyltransferase"/>
    <property type="match status" value="1"/>
</dbReference>
<dbReference type="Gene3D" id="3.20.20.60">
    <property type="entry name" value="Phosphoenolpyruvate-binding domains"/>
    <property type="match status" value="1"/>
</dbReference>
<dbReference type="HAMAP" id="MF_00156">
    <property type="entry name" value="PanB"/>
    <property type="match status" value="1"/>
</dbReference>
<dbReference type="InterPro" id="IPR003700">
    <property type="entry name" value="Pantoate_hydroxy_MeTrfase"/>
</dbReference>
<dbReference type="InterPro" id="IPR015813">
    <property type="entry name" value="Pyrv/PenolPyrv_kinase-like_dom"/>
</dbReference>
<dbReference type="InterPro" id="IPR040442">
    <property type="entry name" value="Pyrv_kinase-like_dom_sf"/>
</dbReference>
<dbReference type="NCBIfam" id="TIGR00222">
    <property type="entry name" value="panB"/>
    <property type="match status" value="1"/>
</dbReference>
<dbReference type="NCBIfam" id="NF001452">
    <property type="entry name" value="PRK00311.1"/>
    <property type="match status" value="1"/>
</dbReference>
<dbReference type="PANTHER" id="PTHR20881">
    <property type="entry name" value="3-METHYL-2-OXOBUTANOATE HYDROXYMETHYLTRANSFERASE"/>
    <property type="match status" value="1"/>
</dbReference>
<dbReference type="PANTHER" id="PTHR20881:SF0">
    <property type="entry name" value="3-METHYL-2-OXOBUTANOATE HYDROXYMETHYLTRANSFERASE"/>
    <property type="match status" value="1"/>
</dbReference>
<dbReference type="Pfam" id="PF02548">
    <property type="entry name" value="Pantoate_transf"/>
    <property type="match status" value="1"/>
</dbReference>
<dbReference type="PIRSF" id="PIRSF000388">
    <property type="entry name" value="Pantoate_hydroxy_MeTrfase"/>
    <property type="match status" value="1"/>
</dbReference>
<dbReference type="SUPFAM" id="SSF51621">
    <property type="entry name" value="Phosphoenolpyruvate/pyruvate domain"/>
    <property type="match status" value="1"/>
</dbReference>
<reference key="1">
    <citation type="journal article" date="2008" name="PLoS ONE">
        <title>Comparative analysis of Acinetobacters: three genomes for three lifestyles.</title>
        <authorList>
            <person name="Vallenet D."/>
            <person name="Nordmann P."/>
            <person name="Barbe V."/>
            <person name="Poirel L."/>
            <person name="Mangenot S."/>
            <person name="Bataille E."/>
            <person name="Dossat C."/>
            <person name="Gas S."/>
            <person name="Kreimeyer A."/>
            <person name="Lenoble P."/>
            <person name="Oztas S."/>
            <person name="Poulain J."/>
            <person name="Segurens B."/>
            <person name="Robert C."/>
            <person name="Abergel C."/>
            <person name="Claverie J.-M."/>
            <person name="Raoult D."/>
            <person name="Medigue C."/>
            <person name="Weissenbach J."/>
            <person name="Cruveiller S."/>
        </authorList>
    </citation>
    <scope>NUCLEOTIDE SEQUENCE [LARGE SCALE GENOMIC DNA]</scope>
    <source>
        <strain>AYE</strain>
    </source>
</reference>
<keyword id="KW-0963">Cytoplasm</keyword>
<keyword id="KW-0460">Magnesium</keyword>
<keyword id="KW-0479">Metal-binding</keyword>
<keyword id="KW-0566">Pantothenate biosynthesis</keyword>
<keyword id="KW-0808">Transferase</keyword>
<feature type="chain" id="PRO_1000096935" description="3-methyl-2-oxobutanoate hydroxymethyltransferase">
    <location>
        <begin position="1"/>
        <end position="269"/>
    </location>
</feature>
<feature type="active site" description="Proton acceptor" evidence="1">
    <location>
        <position position="179"/>
    </location>
</feature>
<feature type="binding site" evidence="1">
    <location>
        <begin position="43"/>
        <end position="44"/>
    </location>
    <ligand>
        <name>3-methyl-2-oxobutanoate</name>
        <dbReference type="ChEBI" id="CHEBI:11851"/>
    </ligand>
</feature>
<feature type="binding site" evidence="1">
    <location>
        <position position="43"/>
    </location>
    <ligand>
        <name>Mg(2+)</name>
        <dbReference type="ChEBI" id="CHEBI:18420"/>
    </ligand>
</feature>
<feature type="binding site" evidence="1">
    <location>
        <position position="82"/>
    </location>
    <ligand>
        <name>3-methyl-2-oxobutanoate</name>
        <dbReference type="ChEBI" id="CHEBI:11851"/>
    </ligand>
</feature>
<feature type="binding site" evidence="1">
    <location>
        <position position="82"/>
    </location>
    <ligand>
        <name>Mg(2+)</name>
        <dbReference type="ChEBI" id="CHEBI:18420"/>
    </ligand>
</feature>
<feature type="binding site" evidence="1">
    <location>
        <position position="110"/>
    </location>
    <ligand>
        <name>3-methyl-2-oxobutanoate</name>
        <dbReference type="ChEBI" id="CHEBI:11851"/>
    </ligand>
</feature>
<feature type="binding site" evidence="1">
    <location>
        <position position="112"/>
    </location>
    <ligand>
        <name>Mg(2+)</name>
        <dbReference type="ChEBI" id="CHEBI:18420"/>
    </ligand>
</feature>
<name>PANB_ACIBY</name>